<proteinExistence type="evidence at protein level"/>
<feature type="chain" id="PRO_0000057794" description="Stage II sporulation protein E">
    <location>
        <begin position="1"/>
        <end position="827"/>
    </location>
</feature>
<feature type="transmembrane region" description="Helical" evidence="2">
    <location>
        <begin position="49"/>
        <end position="69"/>
    </location>
</feature>
<feature type="transmembrane region" description="Helical" evidence="2">
    <location>
        <begin position="71"/>
        <end position="91"/>
    </location>
</feature>
<feature type="transmembrane region" description="Helical" evidence="2">
    <location>
        <begin position="116"/>
        <end position="136"/>
    </location>
</feature>
<feature type="transmembrane region" description="Helical" evidence="2">
    <location>
        <begin position="142"/>
        <end position="162"/>
    </location>
</feature>
<feature type="transmembrane region" description="Helical" evidence="2">
    <location>
        <begin position="175"/>
        <end position="195"/>
    </location>
</feature>
<feature type="transmembrane region" description="Helical" evidence="2">
    <location>
        <begin position="206"/>
        <end position="226"/>
    </location>
</feature>
<feature type="transmembrane region" description="Helical" evidence="2">
    <location>
        <begin position="247"/>
        <end position="267"/>
    </location>
</feature>
<feature type="transmembrane region" description="Helical" evidence="2">
    <location>
        <begin position="269"/>
        <end position="289"/>
    </location>
</feature>
<feature type="transmembrane region" description="Helical" evidence="2">
    <location>
        <begin position="299"/>
        <end position="319"/>
    </location>
</feature>
<feature type="transmembrane region" description="Helical" evidence="2">
    <location>
        <begin position="320"/>
        <end position="340"/>
    </location>
</feature>
<feature type="topological domain" description="Cytoplasmic" evidence="2">
    <location>
        <begin position="341"/>
        <end position="827"/>
    </location>
</feature>
<feature type="domain" description="PPM-type phosphatase" evidence="3">
    <location>
        <begin position="594"/>
        <end position="804"/>
    </location>
</feature>
<feature type="strand" evidence="6">
    <location>
        <begin position="590"/>
        <end position="600"/>
    </location>
</feature>
<feature type="helix" evidence="6">
    <location>
        <begin position="602"/>
        <end position="604"/>
    </location>
</feature>
<feature type="strand" evidence="6">
    <location>
        <begin position="609"/>
        <end position="615"/>
    </location>
</feature>
<feature type="turn" evidence="6">
    <location>
        <begin position="618"/>
        <end position="620"/>
    </location>
</feature>
<feature type="strand" evidence="6">
    <location>
        <begin position="621"/>
        <end position="628"/>
    </location>
</feature>
<feature type="helix" evidence="6">
    <location>
        <begin position="634"/>
        <end position="651"/>
    </location>
</feature>
<feature type="turn" evidence="6">
    <location>
        <begin position="652"/>
        <end position="654"/>
    </location>
</feature>
<feature type="helix" evidence="6">
    <location>
        <begin position="657"/>
        <end position="669"/>
    </location>
</feature>
<feature type="strand" evidence="4">
    <location>
        <begin position="673"/>
        <end position="675"/>
    </location>
</feature>
<feature type="strand" evidence="6">
    <location>
        <begin position="679"/>
        <end position="686"/>
    </location>
</feature>
<feature type="turn" evidence="6">
    <location>
        <begin position="687"/>
        <end position="689"/>
    </location>
</feature>
<feature type="strand" evidence="6">
    <location>
        <begin position="691"/>
        <end position="699"/>
    </location>
</feature>
<feature type="strand" evidence="6">
    <location>
        <begin position="702"/>
        <end position="706"/>
    </location>
</feature>
<feature type="strand" evidence="6">
    <location>
        <begin position="709"/>
        <end position="713"/>
    </location>
</feature>
<feature type="strand" evidence="6">
    <location>
        <begin position="728"/>
        <end position="734"/>
    </location>
</feature>
<feature type="strand" evidence="6">
    <location>
        <begin position="740"/>
        <end position="744"/>
    </location>
</feature>
<feature type="helix" evidence="6">
    <location>
        <begin position="746"/>
        <end position="749"/>
    </location>
</feature>
<feature type="strand" evidence="5">
    <location>
        <begin position="752"/>
        <end position="754"/>
    </location>
</feature>
<feature type="helix" evidence="6">
    <location>
        <begin position="758"/>
        <end position="767"/>
    </location>
</feature>
<feature type="helix" evidence="6">
    <location>
        <begin position="774"/>
        <end position="788"/>
    </location>
</feature>
<feature type="turn" evidence="6">
    <location>
        <begin position="789"/>
        <end position="791"/>
    </location>
</feature>
<feature type="strand" evidence="6">
    <location>
        <begin position="797"/>
        <end position="806"/>
    </location>
</feature>
<protein>
    <recommendedName>
        <fullName>Stage II sporulation protein E</fullName>
        <ecNumber>3.1.3.16</ecNumber>
    </recommendedName>
    <alternativeName>
        <fullName>Stage II sporulation protein H</fullName>
    </alternativeName>
</protein>
<comment type="function">
    <text>Normally needed for pro-sigma E processing during sporulation but can be bypassed in vegetative cells. Activates SpoIIAA by dephosphorylation.</text>
</comment>
<comment type="catalytic activity">
    <reaction>
        <text>O-phospho-L-seryl-[protein] + H2O = L-seryl-[protein] + phosphate</text>
        <dbReference type="Rhea" id="RHEA:20629"/>
        <dbReference type="Rhea" id="RHEA-COMP:9863"/>
        <dbReference type="Rhea" id="RHEA-COMP:11604"/>
        <dbReference type="ChEBI" id="CHEBI:15377"/>
        <dbReference type="ChEBI" id="CHEBI:29999"/>
        <dbReference type="ChEBI" id="CHEBI:43474"/>
        <dbReference type="ChEBI" id="CHEBI:83421"/>
        <dbReference type="EC" id="3.1.3.16"/>
    </reaction>
</comment>
<comment type="catalytic activity">
    <reaction>
        <text>O-phospho-L-threonyl-[protein] + H2O = L-threonyl-[protein] + phosphate</text>
        <dbReference type="Rhea" id="RHEA:47004"/>
        <dbReference type="Rhea" id="RHEA-COMP:11060"/>
        <dbReference type="Rhea" id="RHEA-COMP:11605"/>
        <dbReference type="ChEBI" id="CHEBI:15377"/>
        <dbReference type="ChEBI" id="CHEBI:30013"/>
        <dbReference type="ChEBI" id="CHEBI:43474"/>
        <dbReference type="ChEBI" id="CHEBI:61977"/>
        <dbReference type="EC" id="3.1.3.16"/>
    </reaction>
</comment>
<comment type="cofactor">
    <cofactor>
        <name>Mn(2+)</name>
        <dbReference type="ChEBI" id="CHEBI:29035"/>
    </cofactor>
</comment>
<comment type="interaction">
    <interactant intactId="EBI-9304781">
        <id>P37475</id>
    </interactant>
    <interactant intactId="EBI-5242400">
        <id>P45870</id>
        <label>racA</label>
    </interactant>
    <organismsDiffer>false</organismsDiffer>
    <experiments>3</experiments>
</comment>
<comment type="interaction">
    <interactant intactId="EBI-9304781">
        <id>P37475</id>
    </interactant>
    <interactant intactId="EBI-1535844">
        <id>P16971</id>
        <label>recA</label>
    </interactant>
    <organismsDiffer>false</organismsDiffer>
    <experiments>2</experiments>
</comment>
<comment type="subcellular location">
    <subcellularLocation>
        <location evidence="1">Cell membrane</location>
        <topology evidence="1">Multi-pass membrane protein</topology>
    </subcellularLocation>
    <text>Polar septum.</text>
</comment>
<sequence length="827" mass="91969">MEKAERRVNGPMAGQALEKLQSFFNRGTKLVTHHLHSLFFYKGFIYVVIGFLLGRAFILSEVLPFALPFFGAMLLIRRDKAFYAVLAVLAGALTISPKHSLLILAALLAFFVFSKVAAFITDDRVKALPIVVFFSMAAARAGFVYAQNGVFTTYDYVMAIVEAGLSFILTLIFLQSLPIFTVKKVKQSLKIEEIICFMILIASVLTGLAGLSYQGMQAEHILARYVVLSFSFIGGASIGCTVGVVTGLILGLANIGNLYQMSLLAFSGLLGGLLKEGKKAGAAIGLIVGSLLISLYGEGSAGLMTTLYESLIAVCLFLLTPQSITRKVARYIPGTVEHLQEQQQYARKIRDVTAQKVDQFSNVFHALSESFATFYQASDEQTDDSEVDLFLSKITEHSCQTCYKKNRCWVQNFDKTYDLMKQVMLETEEKEYASNRRLKKEFQQYCSKSKQVEELIEDELAHHHAHLTLKKKVQDSRRLVAEQLLGVSEVMADFSREIKREREQHFLQEEQIIEALQHFGIEIQHVEIYSLEQGNIDIEMTIPFSGHGESEKIIAPMLSDILEEQILVKAEQHSPHPNGYSHVAFGSTKSYRVSTGAAHAAKGGGLVSGDSYSMMELGARKYAAAISDGMGNGARAHFESNETIKLLEKILESGIDEKIAIKTINSILSLRTTDEIYSTLDLSIIDLQDASCKFLKVGSTPSFIKRGDQVMKVQASNLPIGIINEFDVEVVSEQLKAGDLLIMMSDGIFEGPKHVENHDLWMKRKMKGLKTNDPQEIADLLMEEVIRTRSGQIEDDMTVVVVRIDHNTPKWASIPVPAIFQNKQEIS</sequence>
<organism>
    <name type="scientific">Bacillus subtilis (strain 168)</name>
    <dbReference type="NCBI Taxonomy" id="224308"/>
    <lineage>
        <taxon>Bacteria</taxon>
        <taxon>Bacillati</taxon>
        <taxon>Bacillota</taxon>
        <taxon>Bacilli</taxon>
        <taxon>Bacillales</taxon>
        <taxon>Bacillaceae</taxon>
        <taxon>Bacillus</taxon>
    </lineage>
</organism>
<accession>P37475</accession>
<name>SP2E_BACSU</name>
<gene>
    <name type="primary">spoIIE</name>
    <name type="synonym">spoIIH</name>
    <name type="ordered locus">BSU00640</name>
</gene>
<dbReference type="EC" id="3.1.3.16"/>
<dbReference type="EMBL" id="D26185">
    <property type="protein sequence ID" value="BAA05299.1"/>
    <property type="molecule type" value="Genomic_DNA"/>
</dbReference>
<dbReference type="EMBL" id="U26835">
    <property type="protein sequence ID" value="AAB58073.1"/>
    <property type="molecule type" value="Genomic_DNA"/>
</dbReference>
<dbReference type="EMBL" id="AL009126">
    <property type="protein sequence ID" value="CAB11840.1"/>
    <property type="molecule type" value="Genomic_DNA"/>
</dbReference>
<dbReference type="EMBL" id="M29403">
    <property type="protein sequence ID" value="AAA22798.1"/>
    <property type="molecule type" value="Genomic_DNA"/>
</dbReference>
<dbReference type="EMBL" id="L23497">
    <property type="protein sequence ID" value="AAB38381.1"/>
    <property type="molecule type" value="Genomic_DNA"/>
</dbReference>
<dbReference type="PIR" id="S66094">
    <property type="entry name" value="S66094"/>
</dbReference>
<dbReference type="RefSeq" id="NP_387945.1">
    <property type="nucleotide sequence ID" value="NC_000964.3"/>
</dbReference>
<dbReference type="RefSeq" id="WP_003243026.1">
    <property type="nucleotide sequence ID" value="NZ_OZ025638.1"/>
</dbReference>
<dbReference type="PDB" id="3T91">
    <property type="method" value="X-ray"/>
    <property type="resolution" value="2.64 A"/>
    <property type="chains" value="A/B=590-827"/>
</dbReference>
<dbReference type="PDB" id="3T9Q">
    <property type="method" value="X-ray"/>
    <property type="resolution" value="2.76 A"/>
    <property type="chains" value="A/B=590-827"/>
</dbReference>
<dbReference type="PDB" id="5MQH">
    <property type="method" value="X-ray"/>
    <property type="resolution" value="2.45 A"/>
    <property type="chains" value="A=590-827"/>
</dbReference>
<dbReference type="PDB" id="5UCG">
    <property type="method" value="X-ray"/>
    <property type="resolution" value="3.91 A"/>
    <property type="chains" value="A/B/C/D/E=465-809"/>
</dbReference>
<dbReference type="PDBsum" id="3T91"/>
<dbReference type="PDBsum" id="3T9Q"/>
<dbReference type="PDBsum" id="5MQH"/>
<dbReference type="PDBsum" id="5UCG"/>
<dbReference type="SMR" id="P37475"/>
<dbReference type="FunCoup" id="P37475">
    <property type="interactions" value="79"/>
</dbReference>
<dbReference type="IntAct" id="P37475">
    <property type="interactions" value="16"/>
</dbReference>
<dbReference type="STRING" id="224308.BSU00640"/>
<dbReference type="PaxDb" id="224308-BSU00640"/>
<dbReference type="DNASU" id="938480"/>
<dbReference type="EnsemblBacteria" id="CAB11840">
    <property type="protein sequence ID" value="CAB11840"/>
    <property type="gene ID" value="BSU_00640"/>
</dbReference>
<dbReference type="GeneID" id="938480"/>
<dbReference type="KEGG" id="bsu:BSU00640"/>
<dbReference type="PATRIC" id="fig|224308.179.peg.64"/>
<dbReference type="eggNOG" id="COG2208">
    <property type="taxonomic scope" value="Bacteria"/>
</dbReference>
<dbReference type="InParanoid" id="P37475"/>
<dbReference type="OrthoDB" id="9763774at2"/>
<dbReference type="PhylomeDB" id="P37475"/>
<dbReference type="BioCyc" id="BSUB:BSU00640-MONOMER"/>
<dbReference type="BRENDA" id="3.1.3.16">
    <property type="organism ID" value="658"/>
</dbReference>
<dbReference type="EvolutionaryTrace" id="P37475"/>
<dbReference type="Proteomes" id="UP000001570">
    <property type="component" value="Chromosome"/>
</dbReference>
<dbReference type="GO" id="GO:0042601">
    <property type="term" value="C:endospore-forming forespore"/>
    <property type="evidence" value="ECO:0000314"/>
    <property type="project" value="CACAO"/>
</dbReference>
<dbReference type="GO" id="GO:0005886">
    <property type="term" value="C:plasma membrane"/>
    <property type="evidence" value="ECO:0007669"/>
    <property type="project" value="UniProtKB-SubCell"/>
</dbReference>
<dbReference type="GO" id="GO:0016791">
    <property type="term" value="F:phosphatase activity"/>
    <property type="evidence" value="ECO:0000318"/>
    <property type="project" value="GO_Central"/>
</dbReference>
<dbReference type="GO" id="GO:0004722">
    <property type="term" value="F:protein serine/threonine phosphatase activity"/>
    <property type="evidence" value="ECO:0007669"/>
    <property type="project" value="UniProtKB-EC"/>
</dbReference>
<dbReference type="GO" id="GO:0030435">
    <property type="term" value="P:sporulation resulting in formation of a cellular spore"/>
    <property type="evidence" value="ECO:0007669"/>
    <property type="project" value="UniProtKB-KW"/>
</dbReference>
<dbReference type="FunFam" id="3.60.40.10:FF:000100">
    <property type="entry name" value="Stage II sporulation protein E"/>
    <property type="match status" value="1"/>
</dbReference>
<dbReference type="Gene3D" id="3.60.40.10">
    <property type="entry name" value="PPM-type phosphatase domain"/>
    <property type="match status" value="1"/>
</dbReference>
<dbReference type="InterPro" id="IPR052016">
    <property type="entry name" value="Bact_Sigma-Reg"/>
</dbReference>
<dbReference type="InterPro" id="IPR036457">
    <property type="entry name" value="PPM-type-like_dom_sf"/>
</dbReference>
<dbReference type="InterPro" id="IPR001932">
    <property type="entry name" value="PPM-type_phosphatase-like_dom"/>
</dbReference>
<dbReference type="InterPro" id="IPR014221">
    <property type="entry name" value="SpoII_E"/>
</dbReference>
<dbReference type="InterPro" id="IPR045768">
    <property type="entry name" value="SpoIIE_N"/>
</dbReference>
<dbReference type="NCBIfam" id="TIGR02865">
    <property type="entry name" value="spore_II_E"/>
    <property type="match status" value="1"/>
</dbReference>
<dbReference type="PANTHER" id="PTHR43156:SF2">
    <property type="entry name" value="STAGE II SPORULATION PROTEIN E"/>
    <property type="match status" value="1"/>
</dbReference>
<dbReference type="PANTHER" id="PTHR43156">
    <property type="entry name" value="STAGE II SPORULATION PROTEIN E-RELATED"/>
    <property type="match status" value="1"/>
</dbReference>
<dbReference type="Pfam" id="PF07228">
    <property type="entry name" value="SpoIIE"/>
    <property type="match status" value="1"/>
</dbReference>
<dbReference type="Pfam" id="PF19732">
    <property type="entry name" value="SpoIIE_N"/>
    <property type="match status" value="1"/>
</dbReference>
<dbReference type="SMART" id="SM00331">
    <property type="entry name" value="PP2C_SIG"/>
    <property type="match status" value="1"/>
</dbReference>
<dbReference type="SMART" id="SM00332">
    <property type="entry name" value="PP2Cc"/>
    <property type="match status" value="1"/>
</dbReference>
<dbReference type="SUPFAM" id="SSF81606">
    <property type="entry name" value="PP2C-like"/>
    <property type="match status" value="1"/>
</dbReference>
<dbReference type="PROSITE" id="PS51746">
    <property type="entry name" value="PPM_2"/>
    <property type="match status" value="1"/>
</dbReference>
<evidence type="ECO:0000250" key="1"/>
<evidence type="ECO:0000255" key="2"/>
<evidence type="ECO:0000255" key="3">
    <source>
        <dbReference type="PROSITE-ProRule" id="PRU01082"/>
    </source>
</evidence>
<evidence type="ECO:0007829" key="4">
    <source>
        <dbReference type="PDB" id="3T91"/>
    </source>
</evidence>
<evidence type="ECO:0007829" key="5">
    <source>
        <dbReference type="PDB" id="3T9Q"/>
    </source>
</evidence>
<evidence type="ECO:0007829" key="6">
    <source>
        <dbReference type="PDB" id="5MQH"/>
    </source>
</evidence>
<keyword id="KW-0002">3D-structure</keyword>
<keyword id="KW-1003">Cell membrane</keyword>
<keyword id="KW-0378">Hydrolase</keyword>
<keyword id="KW-0472">Membrane</keyword>
<keyword id="KW-0904">Protein phosphatase</keyword>
<keyword id="KW-1185">Reference proteome</keyword>
<keyword id="KW-0749">Sporulation</keyword>
<keyword id="KW-0812">Transmembrane</keyword>
<keyword id="KW-1133">Transmembrane helix</keyword>
<reference key="1">
    <citation type="journal article" date="1994" name="DNA Res.">
        <title>Systematic sequencing of the 180 kilobase region of the Bacillus subtilis chromosome containing the replication origin.</title>
        <authorList>
            <person name="Ogasawara N."/>
            <person name="Nakai S."/>
            <person name="Yoshikawa H."/>
        </authorList>
    </citation>
    <scope>NUCLEOTIDE SEQUENCE [GENOMIC DNA]</scope>
    <source>
        <strain>168</strain>
    </source>
</reference>
<reference key="2">
    <citation type="journal article" date="1996" name="Mol. Microbiol.">
        <title>Structure and function of the Bacillus SpoIIE protein and its localization to sites of sporulation septum assembly.</title>
        <authorList>
            <person name="Barak I."/>
            <person name="Behari J."/>
            <person name="Olmedo G."/>
            <person name="Guzman P."/>
            <person name="Brown D.P."/>
            <person name="Castro E."/>
            <person name="Walker D."/>
            <person name="Westpheling J."/>
            <person name="Youngman P."/>
        </authorList>
    </citation>
    <scope>NUCLEOTIDE SEQUENCE [GENOMIC DNA]</scope>
    <source>
        <strain>168 / PY79</strain>
    </source>
</reference>
<reference key="3">
    <citation type="journal article" date="1997" name="Nature">
        <title>The complete genome sequence of the Gram-positive bacterium Bacillus subtilis.</title>
        <authorList>
            <person name="Kunst F."/>
            <person name="Ogasawara N."/>
            <person name="Moszer I."/>
            <person name="Albertini A.M."/>
            <person name="Alloni G."/>
            <person name="Azevedo V."/>
            <person name="Bertero M.G."/>
            <person name="Bessieres P."/>
            <person name="Bolotin A."/>
            <person name="Borchert S."/>
            <person name="Borriss R."/>
            <person name="Boursier L."/>
            <person name="Brans A."/>
            <person name="Braun M."/>
            <person name="Brignell S.C."/>
            <person name="Bron S."/>
            <person name="Brouillet S."/>
            <person name="Bruschi C.V."/>
            <person name="Caldwell B."/>
            <person name="Capuano V."/>
            <person name="Carter N.M."/>
            <person name="Choi S.-K."/>
            <person name="Codani J.-J."/>
            <person name="Connerton I.F."/>
            <person name="Cummings N.J."/>
            <person name="Daniel R.A."/>
            <person name="Denizot F."/>
            <person name="Devine K.M."/>
            <person name="Duesterhoeft A."/>
            <person name="Ehrlich S.D."/>
            <person name="Emmerson P.T."/>
            <person name="Entian K.-D."/>
            <person name="Errington J."/>
            <person name="Fabret C."/>
            <person name="Ferrari E."/>
            <person name="Foulger D."/>
            <person name="Fritz C."/>
            <person name="Fujita M."/>
            <person name="Fujita Y."/>
            <person name="Fuma S."/>
            <person name="Galizzi A."/>
            <person name="Galleron N."/>
            <person name="Ghim S.-Y."/>
            <person name="Glaser P."/>
            <person name="Goffeau A."/>
            <person name="Golightly E.J."/>
            <person name="Grandi G."/>
            <person name="Guiseppi G."/>
            <person name="Guy B.J."/>
            <person name="Haga K."/>
            <person name="Haiech J."/>
            <person name="Harwood C.R."/>
            <person name="Henaut A."/>
            <person name="Hilbert H."/>
            <person name="Holsappel S."/>
            <person name="Hosono S."/>
            <person name="Hullo M.-F."/>
            <person name="Itaya M."/>
            <person name="Jones L.-M."/>
            <person name="Joris B."/>
            <person name="Karamata D."/>
            <person name="Kasahara Y."/>
            <person name="Klaerr-Blanchard M."/>
            <person name="Klein C."/>
            <person name="Kobayashi Y."/>
            <person name="Koetter P."/>
            <person name="Koningstein G."/>
            <person name="Krogh S."/>
            <person name="Kumano M."/>
            <person name="Kurita K."/>
            <person name="Lapidus A."/>
            <person name="Lardinois S."/>
            <person name="Lauber J."/>
            <person name="Lazarevic V."/>
            <person name="Lee S.-M."/>
            <person name="Levine A."/>
            <person name="Liu H."/>
            <person name="Masuda S."/>
            <person name="Mauel C."/>
            <person name="Medigue C."/>
            <person name="Medina N."/>
            <person name="Mellado R.P."/>
            <person name="Mizuno M."/>
            <person name="Moestl D."/>
            <person name="Nakai S."/>
            <person name="Noback M."/>
            <person name="Noone D."/>
            <person name="O'Reilly M."/>
            <person name="Ogawa K."/>
            <person name="Ogiwara A."/>
            <person name="Oudega B."/>
            <person name="Park S.-H."/>
            <person name="Parro V."/>
            <person name="Pohl T.M."/>
            <person name="Portetelle D."/>
            <person name="Porwollik S."/>
            <person name="Prescott A.M."/>
            <person name="Presecan E."/>
            <person name="Pujic P."/>
            <person name="Purnelle B."/>
            <person name="Rapoport G."/>
            <person name="Rey M."/>
            <person name="Reynolds S."/>
            <person name="Rieger M."/>
            <person name="Rivolta C."/>
            <person name="Rocha E."/>
            <person name="Roche B."/>
            <person name="Rose M."/>
            <person name="Sadaie Y."/>
            <person name="Sato T."/>
            <person name="Scanlan E."/>
            <person name="Schleich S."/>
            <person name="Schroeter R."/>
            <person name="Scoffone F."/>
            <person name="Sekiguchi J."/>
            <person name="Sekowska A."/>
            <person name="Seror S.J."/>
            <person name="Serror P."/>
            <person name="Shin B.-S."/>
            <person name="Soldo B."/>
            <person name="Sorokin A."/>
            <person name="Tacconi E."/>
            <person name="Takagi T."/>
            <person name="Takahashi H."/>
            <person name="Takemaru K."/>
            <person name="Takeuchi M."/>
            <person name="Tamakoshi A."/>
            <person name="Tanaka T."/>
            <person name="Terpstra P."/>
            <person name="Tognoni A."/>
            <person name="Tosato V."/>
            <person name="Uchiyama S."/>
            <person name="Vandenbol M."/>
            <person name="Vannier F."/>
            <person name="Vassarotti A."/>
            <person name="Viari A."/>
            <person name="Wambutt R."/>
            <person name="Wedler E."/>
            <person name="Wedler H."/>
            <person name="Weitzenegger T."/>
            <person name="Winters P."/>
            <person name="Wipat A."/>
            <person name="Yamamoto H."/>
            <person name="Yamane K."/>
            <person name="Yasumoto K."/>
            <person name="Yata K."/>
            <person name="Yoshida K."/>
            <person name="Yoshikawa H.-F."/>
            <person name="Zumstein E."/>
            <person name="Yoshikawa H."/>
            <person name="Danchin A."/>
        </authorList>
    </citation>
    <scope>NUCLEOTIDE SEQUENCE [LARGE SCALE GENOMIC DNA]</scope>
    <source>
        <strain>168</strain>
    </source>
</reference>
<reference key="4">
    <citation type="journal article" date="1988" name="J. Bacteriol.">
        <title>Characterization of the promoter region of the Bacillus subtilis spoIIE operon.</title>
        <authorList>
            <person name="Guzman P."/>
            <person name="Westpheling J."/>
            <person name="Youngman P."/>
        </authorList>
    </citation>
    <scope>NUCLEOTIDE SEQUENCE [GENOMIC DNA] OF 1-16</scope>
</reference>
<reference key="5">
    <citation type="journal article" date="1994" name="J. Bacteriol.">
        <title>Characterization of a cell division gene from Bacillus subtilis that is required for vegetative and sporulation septum formation.</title>
        <authorList>
            <person name="Levin P.A."/>
            <person name="Losick R."/>
        </authorList>
    </citation>
    <scope>NUCLEOTIDE SEQUENCE [GENOMIC DNA] OF 1-7</scope>
    <source>
        <strain>168</strain>
    </source>
</reference>
<reference key="6">
    <citation type="journal article" date="1995" name="Science">
        <title>Activation of cell-specific transcription by a serine phosphatase at the site of asymmetric division.</title>
        <authorList>
            <person name="Duncan L."/>
            <person name="Alper S."/>
            <person name="Arigoni F."/>
            <person name="Losick R."/>
            <person name="Stragier P."/>
        </authorList>
    </citation>
    <scope>CHARACTERIZATION</scope>
</reference>